<accession>A7H110</accession>
<reference key="1">
    <citation type="submission" date="2007-07" db="EMBL/GenBank/DDBJ databases">
        <title>Genome sequence of Campylobacter curvus 525.92 isolated from human feces.</title>
        <authorList>
            <person name="Fouts D.E."/>
            <person name="Mongodin E.F."/>
            <person name="Puiu D."/>
            <person name="Sebastian Y."/>
            <person name="Miller W.G."/>
            <person name="Mandrell R.E."/>
            <person name="Lastovica A.J."/>
            <person name="Nelson K.E."/>
        </authorList>
    </citation>
    <scope>NUCLEOTIDE SEQUENCE [LARGE SCALE GENOMIC DNA]</scope>
    <source>
        <strain>525.92</strain>
    </source>
</reference>
<feature type="chain" id="PRO_1000142095" description="Large ribosomal subunit protein uL4">
    <location>
        <begin position="1"/>
        <end position="204"/>
    </location>
</feature>
<feature type="region of interest" description="Disordered" evidence="2">
    <location>
        <begin position="53"/>
        <end position="74"/>
    </location>
</feature>
<proteinExistence type="inferred from homology"/>
<name>RL4_CAMC5</name>
<comment type="function">
    <text evidence="1">One of the primary rRNA binding proteins, this protein initially binds near the 5'-end of the 23S rRNA. It is important during the early stages of 50S assembly. It makes multiple contacts with different domains of the 23S rRNA in the assembled 50S subunit and ribosome.</text>
</comment>
<comment type="function">
    <text evidence="1">Forms part of the polypeptide exit tunnel.</text>
</comment>
<comment type="subunit">
    <text evidence="1">Part of the 50S ribosomal subunit.</text>
</comment>
<comment type="similarity">
    <text evidence="1">Belongs to the universal ribosomal protein uL4 family.</text>
</comment>
<sequence length="204" mass="22218">MSKILVLNDKFENSGELELPASYAEVNPHNLYLYVKSYLAGMRANTAHTKSRAYVSGGGKKPWRQKGRGGARAGSTRTNVWVGGAVAFGPTNEKNYFQKVNKKQKRLALECALAQKAEAGKLFAVDSLAVESGKTKDAAKIIEALNLRDALIVKDLLDDKTLLAFRNMANCYVVDASEVNAYLVSVFSSVIVEKAVLQTITKEG</sequence>
<keyword id="KW-1185">Reference proteome</keyword>
<keyword id="KW-0687">Ribonucleoprotein</keyword>
<keyword id="KW-0689">Ribosomal protein</keyword>
<keyword id="KW-0694">RNA-binding</keyword>
<keyword id="KW-0699">rRNA-binding</keyword>
<evidence type="ECO:0000255" key="1">
    <source>
        <dbReference type="HAMAP-Rule" id="MF_01328"/>
    </source>
</evidence>
<evidence type="ECO:0000256" key="2">
    <source>
        <dbReference type="SAM" id="MobiDB-lite"/>
    </source>
</evidence>
<evidence type="ECO:0000305" key="3"/>
<gene>
    <name evidence="1" type="primary">rplD</name>
    <name type="ordered locus">Ccur92_18480</name>
    <name type="ORF">CCV52592_1031</name>
</gene>
<dbReference type="EMBL" id="CP000767">
    <property type="protein sequence ID" value="EAT99610.1"/>
    <property type="molecule type" value="Genomic_DNA"/>
</dbReference>
<dbReference type="RefSeq" id="WP_011992853.1">
    <property type="nucleotide sequence ID" value="NC_009715.2"/>
</dbReference>
<dbReference type="SMR" id="A7H110"/>
<dbReference type="STRING" id="360105.CCV52592_1031"/>
<dbReference type="KEGG" id="ccv:CCV52592_1031"/>
<dbReference type="HOGENOM" id="CLU_041575_5_2_7"/>
<dbReference type="OrthoDB" id="9803201at2"/>
<dbReference type="Proteomes" id="UP000006380">
    <property type="component" value="Chromosome"/>
</dbReference>
<dbReference type="GO" id="GO:1990904">
    <property type="term" value="C:ribonucleoprotein complex"/>
    <property type="evidence" value="ECO:0007669"/>
    <property type="project" value="UniProtKB-KW"/>
</dbReference>
<dbReference type="GO" id="GO:0005840">
    <property type="term" value="C:ribosome"/>
    <property type="evidence" value="ECO:0007669"/>
    <property type="project" value="UniProtKB-KW"/>
</dbReference>
<dbReference type="GO" id="GO:0019843">
    <property type="term" value="F:rRNA binding"/>
    <property type="evidence" value="ECO:0007669"/>
    <property type="project" value="UniProtKB-UniRule"/>
</dbReference>
<dbReference type="GO" id="GO:0003735">
    <property type="term" value="F:structural constituent of ribosome"/>
    <property type="evidence" value="ECO:0007669"/>
    <property type="project" value="InterPro"/>
</dbReference>
<dbReference type="GO" id="GO:0006412">
    <property type="term" value="P:translation"/>
    <property type="evidence" value="ECO:0007669"/>
    <property type="project" value="UniProtKB-UniRule"/>
</dbReference>
<dbReference type="FunFam" id="3.40.1370.10:FF:000008">
    <property type="entry name" value="50S ribosomal protein L4"/>
    <property type="match status" value="1"/>
</dbReference>
<dbReference type="Gene3D" id="3.40.1370.10">
    <property type="match status" value="1"/>
</dbReference>
<dbReference type="HAMAP" id="MF_01328_B">
    <property type="entry name" value="Ribosomal_uL4_B"/>
    <property type="match status" value="1"/>
</dbReference>
<dbReference type="InterPro" id="IPR002136">
    <property type="entry name" value="Ribosomal_uL4"/>
</dbReference>
<dbReference type="InterPro" id="IPR013005">
    <property type="entry name" value="Ribosomal_uL4-like"/>
</dbReference>
<dbReference type="InterPro" id="IPR023574">
    <property type="entry name" value="Ribosomal_uL4_dom_sf"/>
</dbReference>
<dbReference type="NCBIfam" id="TIGR03953">
    <property type="entry name" value="rplD_bact"/>
    <property type="match status" value="1"/>
</dbReference>
<dbReference type="PANTHER" id="PTHR10746">
    <property type="entry name" value="50S RIBOSOMAL PROTEIN L4"/>
    <property type="match status" value="1"/>
</dbReference>
<dbReference type="PANTHER" id="PTHR10746:SF6">
    <property type="entry name" value="LARGE RIBOSOMAL SUBUNIT PROTEIN UL4M"/>
    <property type="match status" value="1"/>
</dbReference>
<dbReference type="Pfam" id="PF00573">
    <property type="entry name" value="Ribosomal_L4"/>
    <property type="match status" value="1"/>
</dbReference>
<dbReference type="SUPFAM" id="SSF52166">
    <property type="entry name" value="Ribosomal protein L4"/>
    <property type="match status" value="1"/>
</dbReference>
<organism>
    <name type="scientific">Campylobacter curvus (strain 525.92)</name>
    <dbReference type="NCBI Taxonomy" id="360105"/>
    <lineage>
        <taxon>Bacteria</taxon>
        <taxon>Pseudomonadati</taxon>
        <taxon>Campylobacterota</taxon>
        <taxon>Epsilonproteobacteria</taxon>
        <taxon>Campylobacterales</taxon>
        <taxon>Campylobacteraceae</taxon>
        <taxon>Campylobacter</taxon>
    </lineage>
</organism>
<protein>
    <recommendedName>
        <fullName evidence="1">Large ribosomal subunit protein uL4</fullName>
    </recommendedName>
    <alternativeName>
        <fullName evidence="3">50S ribosomal protein L4</fullName>
    </alternativeName>
</protein>